<evidence type="ECO:0000255" key="1">
    <source>
        <dbReference type="HAMAP-Rule" id="MF_01025"/>
    </source>
</evidence>
<dbReference type="EC" id="2.3.3.13" evidence="1"/>
<dbReference type="EMBL" id="CP000901">
    <property type="protein sequence ID" value="ABX87184.1"/>
    <property type="molecule type" value="Genomic_DNA"/>
</dbReference>
<dbReference type="RefSeq" id="WP_002210453.1">
    <property type="nucleotide sequence ID" value="NZ_CP009935.1"/>
</dbReference>
<dbReference type="SMR" id="A9R142"/>
<dbReference type="GeneID" id="57974079"/>
<dbReference type="KEGG" id="ypg:YpAngola_A2936"/>
<dbReference type="PATRIC" id="fig|349746.12.peg.3982"/>
<dbReference type="UniPathway" id="UPA00048">
    <property type="reaction ID" value="UER00070"/>
</dbReference>
<dbReference type="GO" id="GO:0005829">
    <property type="term" value="C:cytosol"/>
    <property type="evidence" value="ECO:0007669"/>
    <property type="project" value="TreeGrafter"/>
</dbReference>
<dbReference type="GO" id="GO:0003852">
    <property type="term" value="F:2-isopropylmalate synthase activity"/>
    <property type="evidence" value="ECO:0007669"/>
    <property type="project" value="UniProtKB-UniRule"/>
</dbReference>
<dbReference type="GO" id="GO:0003985">
    <property type="term" value="F:acetyl-CoA C-acetyltransferase activity"/>
    <property type="evidence" value="ECO:0007669"/>
    <property type="project" value="UniProtKB-UniRule"/>
</dbReference>
<dbReference type="GO" id="GO:0030145">
    <property type="term" value="F:manganese ion binding"/>
    <property type="evidence" value="ECO:0007669"/>
    <property type="project" value="UniProtKB-UniRule"/>
</dbReference>
<dbReference type="GO" id="GO:0009098">
    <property type="term" value="P:L-leucine biosynthetic process"/>
    <property type="evidence" value="ECO:0007669"/>
    <property type="project" value="UniProtKB-UniRule"/>
</dbReference>
<dbReference type="CDD" id="cd07940">
    <property type="entry name" value="DRE_TIM_IPMS"/>
    <property type="match status" value="1"/>
</dbReference>
<dbReference type="FunFam" id="1.10.238.260:FF:000001">
    <property type="entry name" value="2-isopropylmalate synthase"/>
    <property type="match status" value="1"/>
</dbReference>
<dbReference type="FunFam" id="3.20.20.70:FF:000010">
    <property type="entry name" value="2-isopropylmalate synthase"/>
    <property type="match status" value="1"/>
</dbReference>
<dbReference type="FunFam" id="3.30.160.270:FF:000001">
    <property type="entry name" value="2-isopropylmalate synthase"/>
    <property type="match status" value="1"/>
</dbReference>
<dbReference type="Gene3D" id="1.10.238.260">
    <property type="match status" value="1"/>
</dbReference>
<dbReference type="Gene3D" id="3.30.160.270">
    <property type="match status" value="1"/>
</dbReference>
<dbReference type="Gene3D" id="3.20.20.70">
    <property type="entry name" value="Aldolase class I"/>
    <property type="match status" value="1"/>
</dbReference>
<dbReference type="HAMAP" id="MF_01025">
    <property type="entry name" value="LeuA_type1"/>
    <property type="match status" value="1"/>
</dbReference>
<dbReference type="InterPro" id="IPR050073">
    <property type="entry name" value="2-IPM_HCS-like"/>
</dbReference>
<dbReference type="InterPro" id="IPR013709">
    <property type="entry name" value="2-isopropylmalate_synth_dimer"/>
</dbReference>
<dbReference type="InterPro" id="IPR002034">
    <property type="entry name" value="AIPM/Hcit_synth_CS"/>
</dbReference>
<dbReference type="InterPro" id="IPR013785">
    <property type="entry name" value="Aldolase_TIM"/>
</dbReference>
<dbReference type="InterPro" id="IPR054691">
    <property type="entry name" value="LeuA/HCS_post-cat"/>
</dbReference>
<dbReference type="InterPro" id="IPR036230">
    <property type="entry name" value="LeuA_allosteric_dom_sf"/>
</dbReference>
<dbReference type="InterPro" id="IPR005671">
    <property type="entry name" value="LeuA_bact_synth"/>
</dbReference>
<dbReference type="InterPro" id="IPR000891">
    <property type="entry name" value="PYR_CT"/>
</dbReference>
<dbReference type="NCBIfam" id="TIGR00973">
    <property type="entry name" value="leuA_bact"/>
    <property type="match status" value="1"/>
</dbReference>
<dbReference type="NCBIfam" id="NF002084">
    <property type="entry name" value="PRK00915.1-1"/>
    <property type="match status" value="1"/>
</dbReference>
<dbReference type="NCBIfam" id="NF002086">
    <property type="entry name" value="PRK00915.1-3"/>
    <property type="match status" value="1"/>
</dbReference>
<dbReference type="PANTHER" id="PTHR10277:SF9">
    <property type="entry name" value="2-ISOPROPYLMALATE SYNTHASE 1, CHLOROPLASTIC-RELATED"/>
    <property type="match status" value="1"/>
</dbReference>
<dbReference type="PANTHER" id="PTHR10277">
    <property type="entry name" value="HOMOCITRATE SYNTHASE-RELATED"/>
    <property type="match status" value="1"/>
</dbReference>
<dbReference type="Pfam" id="PF22617">
    <property type="entry name" value="HCS_D2"/>
    <property type="match status" value="1"/>
</dbReference>
<dbReference type="Pfam" id="PF00682">
    <property type="entry name" value="HMGL-like"/>
    <property type="match status" value="1"/>
</dbReference>
<dbReference type="Pfam" id="PF08502">
    <property type="entry name" value="LeuA_dimer"/>
    <property type="match status" value="1"/>
</dbReference>
<dbReference type="SMART" id="SM00917">
    <property type="entry name" value="LeuA_dimer"/>
    <property type="match status" value="1"/>
</dbReference>
<dbReference type="SUPFAM" id="SSF110921">
    <property type="entry name" value="2-isopropylmalate synthase LeuA, allosteric (dimerisation) domain"/>
    <property type="match status" value="1"/>
</dbReference>
<dbReference type="SUPFAM" id="SSF51569">
    <property type="entry name" value="Aldolase"/>
    <property type="match status" value="1"/>
</dbReference>
<dbReference type="PROSITE" id="PS00815">
    <property type="entry name" value="AIPM_HOMOCIT_SYNTH_1"/>
    <property type="match status" value="1"/>
</dbReference>
<dbReference type="PROSITE" id="PS00816">
    <property type="entry name" value="AIPM_HOMOCIT_SYNTH_2"/>
    <property type="match status" value="1"/>
</dbReference>
<dbReference type="PROSITE" id="PS50991">
    <property type="entry name" value="PYR_CT"/>
    <property type="match status" value="1"/>
</dbReference>
<protein>
    <recommendedName>
        <fullName evidence="1">2-isopropylmalate synthase</fullName>
        <ecNumber evidence="1">2.3.3.13</ecNumber>
    </recommendedName>
    <alternativeName>
        <fullName evidence="1">Alpha-IPM synthase</fullName>
    </alternativeName>
    <alternativeName>
        <fullName evidence="1">Alpha-isopropylmalate synthase</fullName>
    </alternativeName>
</protein>
<feature type="chain" id="PRO_1000149342" description="2-isopropylmalate synthase">
    <location>
        <begin position="1"/>
        <end position="520"/>
    </location>
</feature>
<feature type="domain" description="Pyruvate carboxyltransferase" evidence="1">
    <location>
        <begin position="5"/>
        <end position="267"/>
    </location>
</feature>
<feature type="region of interest" description="Regulatory domain" evidence="1">
    <location>
        <begin position="392"/>
        <end position="520"/>
    </location>
</feature>
<feature type="binding site" evidence="1">
    <location>
        <position position="14"/>
    </location>
    <ligand>
        <name>Mn(2+)</name>
        <dbReference type="ChEBI" id="CHEBI:29035"/>
    </ligand>
</feature>
<feature type="binding site" evidence="1">
    <location>
        <position position="202"/>
    </location>
    <ligand>
        <name>Mn(2+)</name>
        <dbReference type="ChEBI" id="CHEBI:29035"/>
    </ligand>
</feature>
<feature type="binding site" evidence="1">
    <location>
        <position position="204"/>
    </location>
    <ligand>
        <name>Mn(2+)</name>
        <dbReference type="ChEBI" id="CHEBI:29035"/>
    </ligand>
</feature>
<feature type="binding site" evidence="1">
    <location>
        <position position="238"/>
    </location>
    <ligand>
        <name>Mn(2+)</name>
        <dbReference type="ChEBI" id="CHEBI:29035"/>
    </ligand>
</feature>
<name>LEU1_YERPG</name>
<reference key="1">
    <citation type="journal article" date="2010" name="J. Bacteriol.">
        <title>Genome sequence of the deep-rooted Yersinia pestis strain Angola reveals new insights into the evolution and pangenome of the plague bacterium.</title>
        <authorList>
            <person name="Eppinger M."/>
            <person name="Worsham P.L."/>
            <person name="Nikolich M.P."/>
            <person name="Riley D.R."/>
            <person name="Sebastian Y."/>
            <person name="Mou S."/>
            <person name="Achtman M."/>
            <person name="Lindler L.E."/>
            <person name="Ravel J."/>
        </authorList>
    </citation>
    <scope>NUCLEOTIDE SEQUENCE [LARGE SCALE GENOMIC DNA]</scope>
    <source>
        <strain>Angola</strain>
    </source>
</reference>
<organism>
    <name type="scientific">Yersinia pestis bv. Antiqua (strain Angola)</name>
    <dbReference type="NCBI Taxonomy" id="349746"/>
    <lineage>
        <taxon>Bacteria</taxon>
        <taxon>Pseudomonadati</taxon>
        <taxon>Pseudomonadota</taxon>
        <taxon>Gammaproteobacteria</taxon>
        <taxon>Enterobacterales</taxon>
        <taxon>Yersiniaceae</taxon>
        <taxon>Yersinia</taxon>
    </lineage>
</organism>
<sequence>MSQQVIIFDTTLRDGEQALQASLSVKEKLQIALALERMGVDIMEVGFPVSSPGDFESVRTIAQQVKNSRVCALARCVDKDIDVAAEALRIAEAFRIHVFLATSTLHIESKLKRSFDDVLAMAVHSVKRARNYTDDVEFSCEDAGRTPIDNLCRVVEAAITAGATTINIPDTVGYTTPYQFGGIITDLYERVPNIDKAIISVHCHDDLGMSVANSITAVQAGARQVEGTINGLGERAGNCSLEEVIMAIKVRHEMLGVHTNINHQEIYRTSQLVSKICNMPIPGNKAIVGSNAFAHSSGIHQDGVLKNRENYEIMTPESIGLKEVQLNLTSRSGRAAVKHRMEEMGYQDKDYNLDSLYDAFLKLADKKGQVFDYDLEALAFINKQQEEPEYYRLDYFSVQSGSSVMATASVKLVCGEEIKSEAATGNGPVDAVYQAINRITDYPIELVKYQLSAKGQGKDALGQVDIVVDHKGRRFHGVGLATDIVESSAKALVHVLNNIWRAHQVEKEKQRLQQNNQEMV</sequence>
<gene>
    <name evidence="1" type="primary">leuA</name>
    <name type="ordered locus">YpAngola_A2936</name>
</gene>
<accession>A9R142</accession>
<proteinExistence type="inferred from homology"/>
<keyword id="KW-0028">Amino-acid biosynthesis</keyword>
<keyword id="KW-0100">Branched-chain amino acid biosynthesis</keyword>
<keyword id="KW-0963">Cytoplasm</keyword>
<keyword id="KW-0432">Leucine biosynthesis</keyword>
<keyword id="KW-0464">Manganese</keyword>
<keyword id="KW-0479">Metal-binding</keyword>
<keyword id="KW-0808">Transferase</keyword>
<comment type="function">
    <text evidence="1">Catalyzes the condensation of the acetyl group of acetyl-CoA with 3-methyl-2-oxobutanoate (2-ketoisovalerate) to form 3-carboxy-3-hydroxy-4-methylpentanoate (2-isopropylmalate).</text>
</comment>
<comment type="catalytic activity">
    <reaction evidence="1">
        <text>3-methyl-2-oxobutanoate + acetyl-CoA + H2O = (2S)-2-isopropylmalate + CoA + H(+)</text>
        <dbReference type="Rhea" id="RHEA:21524"/>
        <dbReference type="ChEBI" id="CHEBI:1178"/>
        <dbReference type="ChEBI" id="CHEBI:11851"/>
        <dbReference type="ChEBI" id="CHEBI:15377"/>
        <dbReference type="ChEBI" id="CHEBI:15378"/>
        <dbReference type="ChEBI" id="CHEBI:57287"/>
        <dbReference type="ChEBI" id="CHEBI:57288"/>
        <dbReference type="EC" id="2.3.3.13"/>
    </reaction>
</comment>
<comment type="cofactor">
    <cofactor evidence="1">
        <name>Mn(2+)</name>
        <dbReference type="ChEBI" id="CHEBI:29035"/>
    </cofactor>
</comment>
<comment type="pathway">
    <text evidence="1">Amino-acid biosynthesis; L-leucine biosynthesis; L-leucine from 3-methyl-2-oxobutanoate: step 1/4.</text>
</comment>
<comment type="subunit">
    <text evidence="1">Homodimer.</text>
</comment>
<comment type="subcellular location">
    <subcellularLocation>
        <location evidence="1">Cytoplasm</location>
    </subcellularLocation>
</comment>
<comment type="similarity">
    <text evidence="1">Belongs to the alpha-IPM synthase/homocitrate synthase family. LeuA type 1 subfamily.</text>
</comment>